<comment type="function">
    <text evidence="1">One of the primary rRNA binding proteins, it binds directly to 16S rRNA where it nucleates assembly of the head domain of the 30S subunit. Is located at the subunit interface close to the decoding center, probably blocks exit of the E-site tRNA.</text>
</comment>
<comment type="subunit">
    <text evidence="1">Part of the 30S ribosomal subunit. Contacts proteins S9 and S11.</text>
</comment>
<comment type="similarity">
    <text evidence="1">Belongs to the universal ribosomal protein uS7 family.</text>
</comment>
<evidence type="ECO:0000255" key="1">
    <source>
        <dbReference type="HAMAP-Rule" id="MF_00480"/>
    </source>
</evidence>
<evidence type="ECO:0000305" key="2"/>
<name>RS7_COREF</name>
<feature type="chain" id="PRO_0000124253" description="Small ribosomal subunit protein uS7">
    <location>
        <begin position="1"/>
        <end position="155"/>
    </location>
</feature>
<keyword id="KW-1185">Reference proteome</keyword>
<keyword id="KW-0687">Ribonucleoprotein</keyword>
<keyword id="KW-0689">Ribosomal protein</keyword>
<keyword id="KW-0694">RNA-binding</keyword>
<keyword id="KW-0699">rRNA-binding</keyword>
<keyword id="KW-0820">tRNA-binding</keyword>
<accession>Q8FS86</accession>
<organism>
    <name type="scientific">Corynebacterium efficiens (strain DSM 44549 / YS-314 / AJ 12310 / JCM 11189 / NBRC 100395)</name>
    <dbReference type="NCBI Taxonomy" id="196164"/>
    <lineage>
        <taxon>Bacteria</taxon>
        <taxon>Bacillati</taxon>
        <taxon>Actinomycetota</taxon>
        <taxon>Actinomycetes</taxon>
        <taxon>Mycobacteriales</taxon>
        <taxon>Corynebacteriaceae</taxon>
        <taxon>Corynebacterium</taxon>
    </lineage>
</organism>
<sequence>MRKSAAPKRPVVKDPVYDSELVTQLVNKILLDGKKSTAERIVYGALEICREKTGLEPVGTLEKALGNVRPDLEVRSRRVGGATYQVPVEVRPARATTLALRWLVTFTRQRRENTMVERLANEIMDAANGLGASVKRREDTHKMAEANRAFAHYRW</sequence>
<gene>
    <name evidence="1" type="primary">rpsG</name>
    <name type="ordered locus">CE0515</name>
</gene>
<dbReference type="EMBL" id="BA000035">
    <property type="protein sequence ID" value="BAC17325.1"/>
    <property type="molecule type" value="Genomic_DNA"/>
</dbReference>
<dbReference type="RefSeq" id="WP_006769814.1">
    <property type="nucleotide sequence ID" value="NC_004369.1"/>
</dbReference>
<dbReference type="SMR" id="Q8FS86"/>
<dbReference type="STRING" id="196164.gene:10740917"/>
<dbReference type="KEGG" id="cef:CE0515"/>
<dbReference type="eggNOG" id="COG0049">
    <property type="taxonomic scope" value="Bacteria"/>
</dbReference>
<dbReference type="HOGENOM" id="CLU_072226_1_1_11"/>
<dbReference type="OrthoDB" id="9807653at2"/>
<dbReference type="Proteomes" id="UP000001409">
    <property type="component" value="Chromosome"/>
</dbReference>
<dbReference type="GO" id="GO:0015935">
    <property type="term" value="C:small ribosomal subunit"/>
    <property type="evidence" value="ECO:0007669"/>
    <property type="project" value="InterPro"/>
</dbReference>
<dbReference type="GO" id="GO:0019843">
    <property type="term" value="F:rRNA binding"/>
    <property type="evidence" value="ECO:0007669"/>
    <property type="project" value="UniProtKB-UniRule"/>
</dbReference>
<dbReference type="GO" id="GO:0003735">
    <property type="term" value="F:structural constituent of ribosome"/>
    <property type="evidence" value="ECO:0007669"/>
    <property type="project" value="InterPro"/>
</dbReference>
<dbReference type="GO" id="GO:0000049">
    <property type="term" value="F:tRNA binding"/>
    <property type="evidence" value="ECO:0007669"/>
    <property type="project" value="UniProtKB-UniRule"/>
</dbReference>
<dbReference type="GO" id="GO:0006412">
    <property type="term" value="P:translation"/>
    <property type="evidence" value="ECO:0007669"/>
    <property type="project" value="UniProtKB-UniRule"/>
</dbReference>
<dbReference type="CDD" id="cd14869">
    <property type="entry name" value="uS7_Bacteria"/>
    <property type="match status" value="1"/>
</dbReference>
<dbReference type="FunFam" id="1.10.455.10:FF:000001">
    <property type="entry name" value="30S ribosomal protein S7"/>
    <property type="match status" value="1"/>
</dbReference>
<dbReference type="Gene3D" id="1.10.455.10">
    <property type="entry name" value="Ribosomal protein S7 domain"/>
    <property type="match status" value="1"/>
</dbReference>
<dbReference type="HAMAP" id="MF_00480_B">
    <property type="entry name" value="Ribosomal_uS7_B"/>
    <property type="match status" value="1"/>
</dbReference>
<dbReference type="InterPro" id="IPR000235">
    <property type="entry name" value="Ribosomal_uS7"/>
</dbReference>
<dbReference type="InterPro" id="IPR005717">
    <property type="entry name" value="Ribosomal_uS7_bac/org-type"/>
</dbReference>
<dbReference type="InterPro" id="IPR020606">
    <property type="entry name" value="Ribosomal_uS7_CS"/>
</dbReference>
<dbReference type="InterPro" id="IPR023798">
    <property type="entry name" value="Ribosomal_uS7_dom"/>
</dbReference>
<dbReference type="InterPro" id="IPR036823">
    <property type="entry name" value="Ribosomal_uS7_dom_sf"/>
</dbReference>
<dbReference type="NCBIfam" id="TIGR01029">
    <property type="entry name" value="rpsG_bact"/>
    <property type="match status" value="1"/>
</dbReference>
<dbReference type="PANTHER" id="PTHR11205">
    <property type="entry name" value="RIBOSOMAL PROTEIN S7"/>
    <property type="match status" value="1"/>
</dbReference>
<dbReference type="Pfam" id="PF00177">
    <property type="entry name" value="Ribosomal_S7"/>
    <property type="match status" value="1"/>
</dbReference>
<dbReference type="PIRSF" id="PIRSF002122">
    <property type="entry name" value="RPS7p_RPS7a_RPS5e_RPS7o"/>
    <property type="match status" value="1"/>
</dbReference>
<dbReference type="SUPFAM" id="SSF47973">
    <property type="entry name" value="Ribosomal protein S7"/>
    <property type="match status" value="1"/>
</dbReference>
<dbReference type="PROSITE" id="PS00052">
    <property type="entry name" value="RIBOSOMAL_S7"/>
    <property type="match status" value="1"/>
</dbReference>
<reference key="1">
    <citation type="journal article" date="2003" name="Genome Res.">
        <title>Comparative complete genome sequence analysis of the amino acid replacements responsible for the thermostability of Corynebacterium efficiens.</title>
        <authorList>
            <person name="Nishio Y."/>
            <person name="Nakamura Y."/>
            <person name="Kawarabayasi Y."/>
            <person name="Usuda Y."/>
            <person name="Kimura E."/>
            <person name="Sugimoto S."/>
            <person name="Matsui K."/>
            <person name="Yamagishi A."/>
            <person name="Kikuchi H."/>
            <person name="Ikeo K."/>
            <person name="Gojobori T."/>
        </authorList>
    </citation>
    <scope>NUCLEOTIDE SEQUENCE [LARGE SCALE GENOMIC DNA]</scope>
    <source>
        <strain>DSM 44549 / YS-314 / AJ 12310 / JCM 11189 / NBRC 100395</strain>
    </source>
</reference>
<proteinExistence type="inferred from homology"/>
<protein>
    <recommendedName>
        <fullName evidence="1">Small ribosomal subunit protein uS7</fullName>
    </recommendedName>
    <alternativeName>
        <fullName evidence="2">30S ribosomal protein S7</fullName>
    </alternativeName>
</protein>